<gene>
    <name evidence="1" type="primary">nrdR</name>
    <name type="ordered locus">Noca_3812</name>
</gene>
<reference key="1">
    <citation type="submission" date="2006-12" db="EMBL/GenBank/DDBJ databases">
        <title>Complete sequence of chromosome 1 of Nocardioides sp. JS614.</title>
        <authorList>
            <person name="Copeland A."/>
            <person name="Lucas S."/>
            <person name="Lapidus A."/>
            <person name="Barry K."/>
            <person name="Detter J.C."/>
            <person name="Glavina del Rio T."/>
            <person name="Hammon N."/>
            <person name="Israni S."/>
            <person name="Dalin E."/>
            <person name="Tice H."/>
            <person name="Pitluck S."/>
            <person name="Thompson L.S."/>
            <person name="Brettin T."/>
            <person name="Bruce D."/>
            <person name="Han C."/>
            <person name="Tapia R."/>
            <person name="Schmutz J."/>
            <person name="Larimer F."/>
            <person name="Land M."/>
            <person name="Hauser L."/>
            <person name="Kyrpides N."/>
            <person name="Kim E."/>
            <person name="Mattes T."/>
            <person name="Gossett J."/>
            <person name="Richardson P."/>
        </authorList>
    </citation>
    <scope>NUCLEOTIDE SEQUENCE [LARGE SCALE GENOMIC DNA]</scope>
    <source>
        <strain>ATCC BAA-499 / JS614</strain>
    </source>
</reference>
<evidence type="ECO:0000255" key="1">
    <source>
        <dbReference type="HAMAP-Rule" id="MF_00440"/>
    </source>
</evidence>
<dbReference type="EMBL" id="CP000509">
    <property type="protein sequence ID" value="ABL83312.1"/>
    <property type="molecule type" value="Genomic_DNA"/>
</dbReference>
<dbReference type="RefSeq" id="WP_011757243.1">
    <property type="nucleotide sequence ID" value="NC_008699.1"/>
</dbReference>
<dbReference type="SMR" id="A1SNC7"/>
<dbReference type="STRING" id="196162.Noca_3812"/>
<dbReference type="KEGG" id="nca:Noca_3812"/>
<dbReference type="eggNOG" id="COG1327">
    <property type="taxonomic scope" value="Bacteria"/>
</dbReference>
<dbReference type="HOGENOM" id="CLU_108412_1_0_11"/>
<dbReference type="OrthoDB" id="9807461at2"/>
<dbReference type="Proteomes" id="UP000000640">
    <property type="component" value="Chromosome"/>
</dbReference>
<dbReference type="GO" id="GO:0005524">
    <property type="term" value="F:ATP binding"/>
    <property type="evidence" value="ECO:0007669"/>
    <property type="project" value="UniProtKB-KW"/>
</dbReference>
<dbReference type="GO" id="GO:0003677">
    <property type="term" value="F:DNA binding"/>
    <property type="evidence" value="ECO:0007669"/>
    <property type="project" value="UniProtKB-KW"/>
</dbReference>
<dbReference type="GO" id="GO:0008270">
    <property type="term" value="F:zinc ion binding"/>
    <property type="evidence" value="ECO:0007669"/>
    <property type="project" value="UniProtKB-UniRule"/>
</dbReference>
<dbReference type="GO" id="GO:0045892">
    <property type="term" value="P:negative regulation of DNA-templated transcription"/>
    <property type="evidence" value="ECO:0007669"/>
    <property type="project" value="UniProtKB-UniRule"/>
</dbReference>
<dbReference type="HAMAP" id="MF_00440">
    <property type="entry name" value="NrdR"/>
    <property type="match status" value="1"/>
</dbReference>
<dbReference type="InterPro" id="IPR005144">
    <property type="entry name" value="ATP-cone_dom"/>
</dbReference>
<dbReference type="InterPro" id="IPR055173">
    <property type="entry name" value="NrdR-like_N"/>
</dbReference>
<dbReference type="InterPro" id="IPR003796">
    <property type="entry name" value="RNR_NrdR-like"/>
</dbReference>
<dbReference type="NCBIfam" id="TIGR00244">
    <property type="entry name" value="transcriptional regulator NrdR"/>
    <property type="match status" value="1"/>
</dbReference>
<dbReference type="PANTHER" id="PTHR30455">
    <property type="entry name" value="TRANSCRIPTIONAL REPRESSOR NRDR"/>
    <property type="match status" value="1"/>
</dbReference>
<dbReference type="PANTHER" id="PTHR30455:SF2">
    <property type="entry name" value="TRANSCRIPTIONAL REPRESSOR NRDR"/>
    <property type="match status" value="1"/>
</dbReference>
<dbReference type="Pfam" id="PF03477">
    <property type="entry name" value="ATP-cone"/>
    <property type="match status" value="1"/>
</dbReference>
<dbReference type="Pfam" id="PF22811">
    <property type="entry name" value="Zn_ribbon_NrdR"/>
    <property type="match status" value="1"/>
</dbReference>
<dbReference type="PROSITE" id="PS51161">
    <property type="entry name" value="ATP_CONE"/>
    <property type="match status" value="1"/>
</dbReference>
<organism>
    <name type="scientific">Nocardioides sp. (strain ATCC BAA-499 / JS614)</name>
    <dbReference type="NCBI Taxonomy" id="196162"/>
    <lineage>
        <taxon>Bacteria</taxon>
        <taxon>Bacillati</taxon>
        <taxon>Actinomycetota</taxon>
        <taxon>Actinomycetes</taxon>
        <taxon>Propionibacteriales</taxon>
        <taxon>Nocardioidaceae</taxon>
        <taxon>Nocardioides</taxon>
    </lineage>
</organism>
<protein>
    <recommendedName>
        <fullName evidence="1">Transcriptional repressor NrdR</fullName>
    </recommendedName>
</protein>
<keyword id="KW-0067">ATP-binding</keyword>
<keyword id="KW-0238">DNA-binding</keyword>
<keyword id="KW-0479">Metal-binding</keyword>
<keyword id="KW-0547">Nucleotide-binding</keyword>
<keyword id="KW-1185">Reference proteome</keyword>
<keyword id="KW-0678">Repressor</keyword>
<keyword id="KW-0804">Transcription</keyword>
<keyword id="KW-0805">Transcription regulation</keyword>
<keyword id="KW-0862">Zinc</keyword>
<keyword id="KW-0863">Zinc-finger</keyword>
<sequence>MHCPYCRNTDTRVLDSRVADDGGSIRRRRTCSACAKRFTTVELMQLTVLKRSGASEPFTREKAVAGVRKACKGRPVTEDQLACLGQAVEDALRLDGAAEVPAHEVGLAILGPLRELDEVAYLRFASVYRAFESADDFEDEIAMLRAERPAVAIEPVTVPATEPAPPQPVATG</sequence>
<comment type="function">
    <text evidence="1">Negatively regulates transcription of bacterial ribonucleotide reductase nrd genes and operons by binding to NrdR-boxes.</text>
</comment>
<comment type="cofactor">
    <cofactor evidence="1">
        <name>Zn(2+)</name>
        <dbReference type="ChEBI" id="CHEBI:29105"/>
    </cofactor>
    <text evidence="1">Binds 1 zinc ion.</text>
</comment>
<comment type="similarity">
    <text evidence="1">Belongs to the NrdR family.</text>
</comment>
<proteinExistence type="inferred from homology"/>
<accession>A1SNC7</accession>
<name>NRDR_NOCSJ</name>
<feature type="chain" id="PRO_1000080785" description="Transcriptional repressor NrdR">
    <location>
        <begin position="1"/>
        <end position="172"/>
    </location>
</feature>
<feature type="domain" description="ATP-cone" evidence="1">
    <location>
        <begin position="46"/>
        <end position="136"/>
    </location>
</feature>
<feature type="zinc finger region" evidence="1">
    <location>
        <begin position="3"/>
        <end position="34"/>
    </location>
</feature>